<proteinExistence type="inferred from homology"/>
<name>SYM_METMJ</name>
<evidence type="ECO:0000255" key="1">
    <source>
        <dbReference type="HAMAP-Rule" id="MF_00098"/>
    </source>
</evidence>
<dbReference type="EC" id="6.1.1.10" evidence="1"/>
<dbReference type="EMBL" id="CP000562">
    <property type="protein sequence ID" value="ABN57939.1"/>
    <property type="molecule type" value="Genomic_DNA"/>
</dbReference>
<dbReference type="RefSeq" id="WP_011844848.1">
    <property type="nucleotide sequence ID" value="NC_009051.1"/>
</dbReference>
<dbReference type="SMR" id="A3CX39"/>
<dbReference type="STRING" id="368407.Memar_2013"/>
<dbReference type="GeneID" id="4847587"/>
<dbReference type="GeneID" id="76730091"/>
<dbReference type="KEGG" id="mem:Memar_2013"/>
<dbReference type="eggNOG" id="arCOG00810">
    <property type="taxonomic scope" value="Archaea"/>
</dbReference>
<dbReference type="HOGENOM" id="CLU_009710_1_2_2"/>
<dbReference type="OrthoDB" id="371856at2157"/>
<dbReference type="Proteomes" id="UP000002146">
    <property type="component" value="Chromosome"/>
</dbReference>
<dbReference type="GO" id="GO:0017101">
    <property type="term" value="C:aminoacyl-tRNA synthetase multienzyme complex"/>
    <property type="evidence" value="ECO:0007669"/>
    <property type="project" value="TreeGrafter"/>
</dbReference>
<dbReference type="GO" id="GO:0005829">
    <property type="term" value="C:cytosol"/>
    <property type="evidence" value="ECO:0007669"/>
    <property type="project" value="TreeGrafter"/>
</dbReference>
<dbReference type="GO" id="GO:0005524">
    <property type="term" value="F:ATP binding"/>
    <property type="evidence" value="ECO:0007669"/>
    <property type="project" value="UniProtKB-UniRule"/>
</dbReference>
<dbReference type="GO" id="GO:0046872">
    <property type="term" value="F:metal ion binding"/>
    <property type="evidence" value="ECO:0007669"/>
    <property type="project" value="UniProtKB-KW"/>
</dbReference>
<dbReference type="GO" id="GO:0004825">
    <property type="term" value="F:methionine-tRNA ligase activity"/>
    <property type="evidence" value="ECO:0007669"/>
    <property type="project" value="UniProtKB-UniRule"/>
</dbReference>
<dbReference type="GO" id="GO:0000049">
    <property type="term" value="F:tRNA binding"/>
    <property type="evidence" value="ECO:0007669"/>
    <property type="project" value="UniProtKB-KW"/>
</dbReference>
<dbReference type="GO" id="GO:0006431">
    <property type="term" value="P:methionyl-tRNA aminoacylation"/>
    <property type="evidence" value="ECO:0007669"/>
    <property type="project" value="UniProtKB-UniRule"/>
</dbReference>
<dbReference type="CDD" id="cd07957">
    <property type="entry name" value="Anticodon_Ia_Met"/>
    <property type="match status" value="1"/>
</dbReference>
<dbReference type="CDD" id="cd00814">
    <property type="entry name" value="MetRS_core"/>
    <property type="match status" value="1"/>
</dbReference>
<dbReference type="CDD" id="cd02800">
    <property type="entry name" value="tRNA_bind_EcMetRS_like"/>
    <property type="match status" value="1"/>
</dbReference>
<dbReference type="FunFam" id="2.40.50.140:FF:000042">
    <property type="entry name" value="Methionine--tRNA ligase"/>
    <property type="match status" value="1"/>
</dbReference>
<dbReference type="Gene3D" id="3.40.50.620">
    <property type="entry name" value="HUPs"/>
    <property type="match status" value="1"/>
</dbReference>
<dbReference type="Gene3D" id="1.10.730.10">
    <property type="entry name" value="Isoleucyl-tRNA Synthetase, Domain 1"/>
    <property type="match status" value="1"/>
</dbReference>
<dbReference type="Gene3D" id="2.20.28.20">
    <property type="entry name" value="Methionyl-tRNA synthetase, Zn-domain"/>
    <property type="match status" value="1"/>
</dbReference>
<dbReference type="Gene3D" id="2.40.50.140">
    <property type="entry name" value="Nucleic acid-binding proteins"/>
    <property type="match status" value="1"/>
</dbReference>
<dbReference type="HAMAP" id="MF_00098">
    <property type="entry name" value="Met_tRNA_synth_type1"/>
    <property type="match status" value="1"/>
</dbReference>
<dbReference type="InterPro" id="IPR041872">
    <property type="entry name" value="Anticodon_Met"/>
</dbReference>
<dbReference type="InterPro" id="IPR004495">
    <property type="entry name" value="Met-tRNA-synth_bsu_C"/>
</dbReference>
<dbReference type="InterPro" id="IPR023458">
    <property type="entry name" value="Met-tRNA_ligase_1"/>
</dbReference>
<dbReference type="InterPro" id="IPR014758">
    <property type="entry name" value="Met-tRNA_synth"/>
</dbReference>
<dbReference type="InterPro" id="IPR015413">
    <property type="entry name" value="Methionyl/Leucyl_tRNA_Synth"/>
</dbReference>
<dbReference type="InterPro" id="IPR033911">
    <property type="entry name" value="MetRS_core"/>
</dbReference>
<dbReference type="InterPro" id="IPR029038">
    <property type="entry name" value="MetRS_Zn"/>
</dbReference>
<dbReference type="InterPro" id="IPR012340">
    <property type="entry name" value="NA-bd_OB-fold"/>
</dbReference>
<dbReference type="InterPro" id="IPR014729">
    <property type="entry name" value="Rossmann-like_a/b/a_fold"/>
</dbReference>
<dbReference type="InterPro" id="IPR002547">
    <property type="entry name" value="tRNA-bd_dom"/>
</dbReference>
<dbReference type="InterPro" id="IPR009080">
    <property type="entry name" value="tRNAsynth_Ia_anticodon-bd"/>
</dbReference>
<dbReference type="NCBIfam" id="TIGR00398">
    <property type="entry name" value="metG"/>
    <property type="match status" value="1"/>
</dbReference>
<dbReference type="NCBIfam" id="TIGR00399">
    <property type="entry name" value="metG_C_term"/>
    <property type="match status" value="1"/>
</dbReference>
<dbReference type="NCBIfam" id="NF001100">
    <property type="entry name" value="PRK00133.1"/>
    <property type="match status" value="1"/>
</dbReference>
<dbReference type="PANTHER" id="PTHR45765">
    <property type="entry name" value="METHIONINE--TRNA LIGASE"/>
    <property type="match status" value="1"/>
</dbReference>
<dbReference type="PANTHER" id="PTHR45765:SF1">
    <property type="entry name" value="METHIONINE--TRNA LIGASE, CYTOPLASMIC"/>
    <property type="match status" value="1"/>
</dbReference>
<dbReference type="Pfam" id="PF19303">
    <property type="entry name" value="Anticodon_3"/>
    <property type="match status" value="1"/>
</dbReference>
<dbReference type="Pfam" id="PF09334">
    <property type="entry name" value="tRNA-synt_1g"/>
    <property type="match status" value="1"/>
</dbReference>
<dbReference type="Pfam" id="PF01588">
    <property type="entry name" value="tRNA_bind"/>
    <property type="match status" value="1"/>
</dbReference>
<dbReference type="PRINTS" id="PR01041">
    <property type="entry name" value="TRNASYNTHMET"/>
</dbReference>
<dbReference type="SUPFAM" id="SSF47323">
    <property type="entry name" value="Anticodon-binding domain of a subclass of class I aminoacyl-tRNA synthetases"/>
    <property type="match status" value="1"/>
</dbReference>
<dbReference type="SUPFAM" id="SSF57770">
    <property type="entry name" value="Methionyl-tRNA synthetase (MetRS), Zn-domain"/>
    <property type="match status" value="1"/>
</dbReference>
<dbReference type="SUPFAM" id="SSF50249">
    <property type="entry name" value="Nucleic acid-binding proteins"/>
    <property type="match status" value="1"/>
</dbReference>
<dbReference type="SUPFAM" id="SSF52374">
    <property type="entry name" value="Nucleotidylyl transferase"/>
    <property type="match status" value="1"/>
</dbReference>
<dbReference type="PROSITE" id="PS50886">
    <property type="entry name" value="TRBD"/>
    <property type="match status" value="1"/>
</dbReference>
<comment type="function">
    <text evidence="1">Is required not only for elongation of protein synthesis but also for the initiation of all mRNA translation through initiator tRNA(fMet) aminoacylation.</text>
</comment>
<comment type="catalytic activity">
    <reaction evidence="1">
        <text>tRNA(Met) + L-methionine + ATP = L-methionyl-tRNA(Met) + AMP + diphosphate</text>
        <dbReference type="Rhea" id="RHEA:13481"/>
        <dbReference type="Rhea" id="RHEA-COMP:9667"/>
        <dbReference type="Rhea" id="RHEA-COMP:9698"/>
        <dbReference type="ChEBI" id="CHEBI:30616"/>
        <dbReference type="ChEBI" id="CHEBI:33019"/>
        <dbReference type="ChEBI" id="CHEBI:57844"/>
        <dbReference type="ChEBI" id="CHEBI:78442"/>
        <dbReference type="ChEBI" id="CHEBI:78530"/>
        <dbReference type="ChEBI" id="CHEBI:456215"/>
        <dbReference type="EC" id="6.1.1.10"/>
    </reaction>
</comment>
<comment type="cofactor">
    <cofactor evidence="1">
        <name>Zn(2+)</name>
        <dbReference type="ChEBI" id="CHEBI:29105"/>
    </cofactor>
    <text evidence="1">Binds 1 zinc ion per subunit.</text>
</comment>
<comment type="subunit">
    <text evidence="1">Homodimer.</text>
</comment>
<comment type="subcellular location">
    <subcellularLocation>
        <location evidence="1">Cytoplasm</location>
    </subcellularLocation>
</comment>
<comment type="similarity">
    <text evidence="1">Belongs to the class-I aminoacyl-tRNA synthetase family. MetG type 1 subfamily.</text>
</comment>
<feature type="chain" id="PRO_0000331946" description="Methionine--tRNA ligase">
    <location>
        <begin position="1"/>
        <end position="664"/>
    </location>
</feature>
<feature type="domain" description="tRNA-binding" evidence="1">
    <location>
        <begin position="566"/>
        <end position="664"/>
    </location>
</feature>
<feature type="short sequence motif" description="'HIGH' region">
    <location>
        <begin position="13"/>
        <end position="23"/>
    </location>
</feature>
<feature type="short sequence motif" description="'KMSKS' region">
    <location>
        <begin position="327"/>
        <end position="331"/>
    </location>
</feature>
<feature type="binding site" evidence="1">
    <location>
        <position position="144"/>
    </location>
    <ligand>
        <name>Zn(2+)</name>
        <dbReference type="ChEBI" id="CHEBI:29105"/>
    </ligand>
</feature>
<feature type="binding site" evidence="1">
    <location>
        <position position="147"/>
    </location>
    <ligand>
        <name>Zn(2+)</name>
        <dbReference type="ChEBI" id="CHEBI:29105"/>
    </ligand>
</feature>
<feature type="binding site" evidence="1">
    <location>
        <position position="156"/>
    </location>
    <ligand>
        <name>Zn(2+)</name>
        <dbReference type="ChEBI" id="CHEBI:29105"/>
    </ligand>
</feature>
<feature type="binding site" evidence="1">
    <location>
        <position position="160"/>
    </location>
    <ligand>
        <name>Zn(2+)</name>
        <dbReference type="ChEBI" id="CHEBI:29105"/>
    </ligand>
</feature>
<feature type="binding site" evidence="1">
    <location>
        <position position="330"/>
    </location>
    <ligand>
        <name>ATP</name>
        <dbReference type="ChEBI" id="CHEBI:30616"/>
    </ligand>
</feature>
<sequence length="664" mass="74118">MSGKPLLVTCGLPYTNGPCHIGHLRTYVPADFYVRYMRRSGEEVVFVCGSDNHGTPIVISAEQEGSTPRVLSERYHEHFYETFRRMDVVFDRFGMTDDAMNHETTRSIVERLIENGYVYAETVSQSYCPDCERFLPDRYVEGICPHCGAVARGDECDQGCGQHLEPGEIKDAICKVCGGKAEYREQEHYFFRLSAFREFLLDYLPALGGTSTARNYALGWVKELLHDWCITRTLDWGVKFPGRDDLVVYVWVDAPIGYISFTKEWAQKAGADWKDYWCGDETGVTHFIGGDIIYHHCIFWPALLKGAGYGLPSAVVASGMVTIEGKKFSKSRGYVVWTNDDYLDQGLPADYLRYYLLSYTNHTKELDFSWKVYGERVNNEIVGTLGNFIYRTMYFAEKEFSGVPDLAPRLEVIEEIERSLAAVDGLMRDYDFKNAVDAMMTLASFGNGYIQNNAPWKLIKEDRAAAEQVIADCLQIVKALVLVFEPLMPDAMQRAWTMLGYGDDIADHAIAEATAPVGARPLAKPSTLFAKVEKDQVAALEATLNERVERANAAAAPKMPVVSIEEFGNLDIRIAKVVSAEPIKGSKKLYKLVVDLGSEKRQVVSGIAQFYAPDELVGKDVALIANLAPAKIFGVESRGMILAAGDEASLLVPLRPVKPGTKIR</sequence>
<gene>
    <name evidence="1" type="primary">metG</name>
    <name type="ordered locus">Memar_2013</name>
</gene>
<reference key="1">
    <citation type="journal article" date="2009" name="Stand. Genomic Sci.">
        <title>Complete genome sequence of Methanoculleus marisnigri Romesser et al. 1981 type strain JR1.</title>
        <authorList>
            <person name="Anderson I.J."/>
            <person name="Sieprawska-Lupa M."/>
            <person name="Lapidus A."/>
            <person name="Nolan M."/>
            <person name="Copeland A."/>
            <person name="Glavina Del Rio T."/>
            <person name="Tice H."/>
            <person name="Dalin E."/>
            <person name="Barry K."/>
            <person name="Saunders E."/>
            <person name="Han C."/>
            <person name="Brettin T."/>
            <person name="Detter J.C."/>
            <person name="Bruce D."/>
            <person name="Mikhailova N."/>
            <person name="Pitluck S."/>
            <person name="Hauser L."/>
            <person name="Land M."/>
            <person name="Lucas S."/>
            <person name="Richardson P."/>
            <person name="Whitman W.B."/>
            <person name="Kyrpides N.C."/>
        </authorList>
    </citation>
    <scope>NUCLEOTIDE SEQUENCE [LARGE SCALE GENOMIC DNA]</scope>
    <source>
        <strain>ATCC 35101 / DSM 1498 / JR1</strain>
    </source>
</reference>
<organism>
    <name type="scientific">Methanoculleus marisnigri (strain ATCC 35101 / DSM 1498 / JR1)</name>
    <dbReference type="NCBI Taxonomy" id="368407"/>
    <lineage>
        <taxon>Archaea</taxon>
        <taxon>Methanobacteriati</taxon>
        <taxon>Methanobacteriota</taxon>
        <taxon>Stenosarchaea group</taxon>
        <taxon>Methanomicrobia</taxon>
        <taxon>Methanomicrobiales</taxon>
        <taxon>Methanomicrobiaceae</taxon>
        <taxon>Methanoculleus</taxon>
    </lineage>
</organism>
<accession>A3CX39</accession>
<protein>
    <recommendedName>
        <fullName evidence="1">Methionine--tRNA ligase</fullName>
        <ecNumber evidence="1">6.1.1.10</ecNumber>
    </recommendedName>
    <alternativeName>
        <fullName evidence="1">Methionyl-tRNA synthetase</fullName>
        <shortName evidence="1">MetRS</shortName>
    </alternativeName>
</protein>
<keyword id="KW-0030">Aminoacyl-tRNA synthetase</keyword>
<keyword id="KW-0067">ATP-binding</keyword>
<keyword id="KW-0963">Cytoplasm</keyword>
<keyword id="KW-0436">Ligase</keyword>
<keyword id="KW-0479">Metal-binding</keyword>
<keyword id="KW-0547">Nucleotide-binding</keyword>
<keyword id="KW-0648">Protein biosynthesis</keyword>
<keyword id="KW-0694">RNA-binding</keyword>
<keyword id="KW-0820">tRNA-binding</keyword>
<keyword id="KW-0862">Zinc</keyword>